<gene>
    <name evidence="1" type="primary">rlmN</name>
    <name type="ordered locus">FTF1058c</name>
</gene>
<evidence type="ECO:0000255" key="1">
    <source>
        <dbReference type="HAMAP-Rule" id="MF_01849"/>
    </source>
</evidence>
<evidence type="ECO:0000255" key="2">
    <source>
        <dbReference type="PROSITE-ProRule" id="PRU01266"/>
    </source>
</evidence>
<proteinExistence type="inferred from homology"/>
<name>RLMN_FRAT1</name>
<sequence length="370" mass="41402">MQQDKVNLLGLNQKAIEDFFISIGEKKFHARQVFKWIHKKGVIDFDAMTDLGKNLRHKLKEKAQITIPKVVFSKASKDGTHKWLIDVGGSAVETVFILAEGRGTLCVSSQVGCTLNCSFCSTGKQGFNRNLSAAEVIAQLWIAARTLSKTDGEHDFTVTNIVMMGMGEPLMNFENVVPAMDIMMDDLAYGLSRRKVTLSTSGVVPRIYDLLEQSGVSLAVSLHAPNDMLRNEIVPINKKYNIDELLEACKLYAQKGPHKHITFEYTLIEEVNDNLSDAEELVALLKSREVPAKINLIPFNPYPGTPYKKPSNNRIHRFKEFLQHNGFVTTVRKTRGDDIDAACGQLAGDVMDKTNRKQRYLKKLGDTNAN</sequence>
<organism>
    <name type="scientific">Francisella tularensis subsp. tularensis (strain FSC 198)</name>
    <dbReference type="NCBI Taxonomy" id="393115"/>
    <lineage>
        <taxon>Bacteria</taxon>
        <taxon>Pseudomonadati</taxon>
        <taxon>Pseudomonadota</taxon>
        <taxon>Gammaproteobacteria</taxon>
        <taxon>Thiotrichales</taxon>
        <taxon>Francisellaceae</taxon>
        <taxon>Francisella</taxon>
    </lineage>
</organism>
<dbReference type="EC" id="2.1.1.192" evidence="1"/>
<dbReference type="EMBL" id="AM286280">
    <property type="protein sequence ID" value="CAL09074.1"/>
    <property type="molecule type" value="Genomic_DNA"/>
</dbReference>
<dbReference type="RefSeq" id="WP_003021179.1">
    <property type="nucleotide sequence ID" value="NC_008245.1"/>
</dbReference>
<dbReference type="SMR" id="Q14HF5"/>
<dbReference type="KEGG" id="ftf:FTF1058c"/>
<dbReference type="HOGENOM" id="CLU_029101_0_0_6"/>
<dbReference type="GO" id="GO:0005737">
    <property type="term" value="C:cytoplasm"/>
    <property type="evidence" value="ECO:0007669"/>
    <property type="project" value="UniProtKB-SubCell"/>
</dbReference>
<dbReference type="GO" id="GO:0051539">
    <property type="term" value="F:4 iron, 4 sulfur cluster binding"/>
    <property type="evidence" value="ECO:0007669"/>
    <property type="project" value="UniProtKB-UniRule"/>
</dbReference>
<dbReference type="GO" id="GO:0046872">
    <property type="term" value="F:metal ion binding"/>
    <property type="evidence" value="ECO:0007669"/>
    <property type="project" value="UniProtKB-KW"/>
</dbReference>
<dbReference type="GO" id="GO:0070040">
    <property type="term" value="F:rRNA (adenine(2503)-C2-)-methyltransferase activity"/>
    <property type="evidence" value="ECO:0007669"/>
    <property type="project" value="UniProtKB-UniRule"/>
</dbReference>
<dbReference type="GO" id="GO:0019843">
    <property type="term" value="F:rRNA binding"/>
    <property type="evidence" value="ECO:0007669"/>
    <property type="project" value="UniProtKB-UniRule"/>
</dbReference>
<dbReference type="GO" id="GO:0002935">
    <property type="term" value="F:tRNA (adenine(37)-C2)-methyltransferase activity"/>
    <property type="evidence" value="ECO:0007669"/>
    <property type="project" value="UniProtKB-UniRule"/>
</dbReference>
<dbReference type="GO" id="GO:0000049">
    <property type="term" value="F:tRNA binding"/>
    <property type="evidence" value="ECO:0007669"/>
    <property type="project" value="UniProtKB-UniRule"/>
</dbReference>
<dbReference type="GO" id="GO:0070475">
    <property type="term" value="P:rRNA base methylation"/>
    <property type="evidence" value="ECO:0007669"/>
    <property type="project" value="UniProtKB-UniRule"/>
</dbReference>
<dbReference type="GO" id="GO:0030488">
    <property type="term" value="P:tRNA methylation"/>
    <property type="evidence" value="ECO:0007669"/>
    <property type="project" value="UniProtKB-UniRule"/>
</dbReference>
<dbReference type="CDD" id="cd01335">
    <property type="entry name" value="Radical_SAM"/>
    <property type="match status" value="1"/>
</dbReference>
<dbReference type="FunFam" id="1.10.150.530:FF:000003">
    <property type="entry name" value="Dual-specificity RNA methyltransferase RlmN"/>
    <property type="match status" value="1"/>
</dbReference>
<dbReference type="FunFam" id="3.20.20.70:FF:000008">
    <property type="entry name" value="Dual-specificity RNA methyltransferase RlmN"/>
    <property type="match status" value="1"/>
</dbReference>
<dbReference type="Gene3D" id="1.10.150.530">
    <property type="match status" value="1"/>
</dbReference>
<dbReference type="Gene3D" id="3.20.20.70">
    <property type="entry name" value="Aldolase class I"/>
    <property type="match status" value="1"/>
</dbReference>
<dbReference type="HAMAP" id="MF_01849">
    <property type="entry name" value="RNA_methyltr_RlmN"/>
    <property type="match status" value="1"/>
</dbReference>
<dbReference type="InterPro" id="IPR013785">
    <property type="entry name" value="Aldolase_TIM"/>
</dbReference>
<dbReference type="InterPro" id="IPR006638">
    <property type="entry name" value="Elp3/MiaA/NifB-like_rSAM"/>
</dbReference>
<dbReference type="InterPro" id="IPR040072">
    <property type="entry name" value="Methyltransferase_A"/>
</dbReference>
<dbReference type="InterPro" id="IPR048641">
    <property type="entry name" value="RlmN_N"/>
</dbReference>
<dbReference type="InterPro" id="IPR027492">
    <property type="entry name" value="RNA_MTrfase_RlmN"/>
</dbReference>
<dbReference type="InterPro" id="IPR004383">
    <property type="entry name" value="rRNA_lsu_MTrfase_RlmN/Cfr"/>
</dbReference>
<dbReference type="InterPro" id="IPR007197">
    <property type="entry name" value="rSAM"/>
</dbReference>
<dbReference type="NCBIfam" id="TIGR00048">
    <property type="entry name" value="rRNA_mod_RlmN"/>
    <property type="match status" value="1"/>
</dbReference>
<dbReference type="PANTHER" id="PTHR30544">
    <property type="entry name" value="23S RRNA METHYLTRANSFERASE"/>
    <property type="match status" value="1"/>
</dbReference>
<dbReference type="PANTHER" id="PTHR30544:SF5">
    <property type="entry name" value="RADICAL SAM CORE DOMAIN-CONTAINING PROTEIN"/>
    <property type="match status" value="1"/>
</dbReference>
<dbReference type="Pfam" id="PF04055">
    <property type="entry name" value="Radical_SAM"/>
    <property type="match status" value="1"/>
</dbReference>
<dbReference type="Pfam" id="PF21016">
    <property type="entry name" value="RlmN_N"/>
    <property type="match status" value="1"/>
</dbReference>
<dbReference type="PIRSF" id="PIRSF006004">
    <property type="entry name" value="CHP00048"/>
    <property type="match status" value="1"/>
</dbReference>
<dbReference type="SFLD" id="SFLDF00275">
    <property type="entry name" value="adenosine_C2_methyltransferase"/>
    <property type="match status" value="1"/>
</dbReference>
<dbReference type="SFLD" id="SFLDG01082">
    <property type="entry name" value="B12-binding_domain_containing"/>
    <property type="match status" value="1"/>
</dbReference>
<dbReference type="SFLD" id="SFLDG01062">
    <property type="entry name" value="methyltransferase_(Class_A)"/>
    <property type="match status" value="1"/>
</dbReference>
<dbReference type="SMART" id="SM00729">
    <property type="entry name" value="Elp3"/>
    <property type="match status" value="1"/>
</dbReference>
<dbReference type="SUPFAM" id="SSF102114">
    <property type="entry name" value="Radical SAM enzymes"/>
    <property type="match status" value="1"/>
</dbReference>
<dbReference type="PROSITE" id="PS51918">
    <property type="entry name" value="RADICAL_SAM"/>
    <property type="match status" value="1"/>
</dbReference>
<protein>
    <recommendedName>
        <fullName evidence="1">Dual-specificity RNA methyltransferase RlmN</fullName>
        <ecNumber evidence="1">2.1.1.192</ecNumber>
    </recommendedName>
    <alternativeName>
        <fullName evidence="1">23S rRNA (adenine(2503)-C(2))-methyltransferase</fullName>
    </alternativeName>
    <alternativeName>
        <fullName evidence="1">23S rRNA m2A2503 methyltransferase</fullName>
    </alternativeName>
    <alternativeName>
        <fullName evidence="1">Ribosomal RNA large subunit methyltransferase N</fullName>
    </alternativeName>
    <alternativeName>
        <fullName evidence="1">tRNA (adenine(37)-C(2))-methyltransferase</fullName>
    </alternativeName>
    <alternativeName>
        <fullName evidence="1">tRNA m2A37 methyltransferase</fullName>
    </alternativeName>
</protein>
<comment type="function">
    <text evidence="1">Specifically methylates position 2 of adenine 2503 in 23S rRNA and position 2 of adenine 37 in tRNAs. m2A2503 modification seems to play a crucial role in the proofreading step occurring at the peptidyl transferase center and thus would serve to optimize ribosomal fidelity.</text>
</comment>
<comment type="catalytic activity">
    <reaction evidence="1">
        <text>adenosine(2503) in 23S rRNA + 2 reduced [2Fe-2S]-[ferredoxin] + 2 S-adenosyl-L-methionine = 2-methyladenosine(2503) in 23S rRNA + 5'-deoxyadenosine + L-methionine + 2 oxidized [2Fe-2S]-[ferredoxin] + S-adenosyl-L-homocysteine</text>
        <dbReference type="Rhea" id="RHEA:42916"/>
        <dbReference type="Rhea" id="RHEA-COMP:10000"/>
        <dbReference type="Rhea" id="RHEA-COMP:10001"/>
        <dbReference type="Rhea" id="RHEA-COMP:10152"/>
        <dbReference type="Rhea" id="RHEA-COMP:10282"/>
        <dbReference type="ChEBI" id="CHEBI:17319"/>
        <dbReference type="ChEBI" id="CHEBI:33737"/>
        <dbReference type="ChEBI" id="CHEBI:33738"/>
        <dbReference type="ChEBI" id="CHEBI:57844"/>
        <dbReference type="ChEBI" id="CHEBI:57856"/>
        <dbReference type="ChEBI" id="CHEBI:59789"/>
        <dbReference type="ChEBI" id="CHEBI:74411"/>
        <dbReference type="ChEBI" id="CHEBI:74497"/>
        <dbReference type="EC" id="2.1.1.192"/>
    </reaction>
</comment>
<comment type="catalytic activity">
    <reaction evidence="1">
        <text>adenosine(37) in tRNA + 2 reduced [2Fe-2S]-[ferredoxin] + 2 S-adenosyl-L-methionine = 2-methyladenosine(37) in tRNA + 5'-deoxyadenosine + L-methionine + 2 oxidized [2Fe-2S]-[ferredoxin] + S-adenosyl-L-homocysteine</text>
        <dbReference type="Rhea" id="RHEA:43332"/>
        <dbReference type="Rhea" id="RHEA-COMP:10000"/>
        <dbReference type="Rhea" id="RHEA-COMP:10001"/>
        <dbReference type="Rhea" id="RHEA-COMP:10162"/>
        <dbReference type="Rhea" id="RHEA-COMP:10485"/>
        <dbReference type="ChEBI" id="CHEBI:17319"/>
        <dbReference type="ChEBI" id="CHEBI:33737"/>
        <dbReference type="ChEBI" id="CHEBI:33738"/>
        <dbReference type="ChEBI" id="CHEBI:57844"/>
        <dbReference type="ChEBI" id="CHEBI:57856"/>
        <dbReference type="ChEBI" id="CHEBI:59789"/>
        <dbReference type="ChEBI" id="CHEBI:74411"/>
        <dbReference type="ChEBI" id="CHEBI:74497"/>
        <dbReference type="EC" id="2.1.1.192"/>
    </reaction>
</comment>
<comment type="cofactor">
    <cofactor evidence="1">
        <name>[4Fe-4S] cluster</name>
        <dbReference type="ChEBI" id="CHEBI:49883"/>
    </cofactor>
    <text evidence="1">Binds 1 [4Fe-4S] cluster. The cluster is coordinated with 3 cysteines and an exchangeable S-adenosyl-L-methionine.</text>
</comment>
<comment type="subcellular location">
    <subcellularLocation>
        <location evidence="1">Cytoplasm</location>
    </subcellularLocation>
</comment>
<comment type="miscellaneous">
    <text evidence="1">Reaction proceeds by a ping-pong mechanism involving intermediate methylation of a conserved cysteine residue.</text>
</comment>
<comment type="similarity">
    <text evidence="1">Belongs to the radical SAM superfamily. RlmN family.</text>
</comment>
<accession>Q14HF5</accession>
<reference key="1">
    <citation type="journal article" date="2007" name="PLoS ONE">
        <title>Genome sequencing shows that European isolates of Francisella tularensis subspecies tularensis are almost identical to US laboratory strain Schu S4.</title>
        <authorList>
            <person name="Chaudhuri R.R."/>
            <person name="Ren C.-P."/>
            <person name="Desmond L."/>
            <person name="Vincent G.A."/>
            <person name="Silman N.J."/>
            <person name="Brehm J.K."/>
            <person name="Elmore M.J."/>
            <person name="Hudson M.J."/>
            <person name="Forsman M."/>
            <person name="Isherwood K.E."/>
            <person name="Gurycova D."/>
            <person name="Minton N.P."/>
            <person name="Titball R.W."/>
            <person name="Pallen M.J."/>
            <person name="Vipond R."/>
        </authorList>
    </citation>
    <scope>NUCLEOTIDE SEQUENCE [LARGE SCALE GENOMIC DNA]</scope>
    <source>
        <strain>FSC 198</strain>
    </source>
</reference>
<feature type="chain" id="PRO_0000350186" description="Dual-specificity RNA methyltransferase RlmN">
    <location>
        <begin position="1"/>
        <end position="370"/>
    </location>
</feature>
<feature type="domain" description="Radical SAM core" evidence="2">
    <location>
        <begin position="99"/>
        <end position="337"/>
    </location>
</feature>
<feature type="active site" description="Proton acceptor" evidence="1">
    <location>
        <position position="93"/>
    </location>
</feature>
<feature type="active site" description="S-methylcysteine intermediate" evidence="1">
    <location>
        <position position="343"/>
    </location>
</feature>
<feature type="binding site" evidence="1">
    <location>
        <position position="113"/>
    </location>
    <ligand>
        <name>[4Fe-4S] cluster</name>
        <dbReference type="ChEBI" id="CHEBI:49883"/>
        <note>4Fe-4S-S-AdoMet</note>
    </ligand>
</feature>
<feature type="binding site" evidence="1">
    <location>
        <position position="117"/>
    </location>
    <ligand>
        <name>[4Fe-4S] cluster</name>
        <dbReference type="ChEBI" id="CHEBI:49883"/>
        <note>4Fe-4S-S-AdoMet</note>
    </ligand>
</feature>
<feature type="binding site" evidence="1">
    <location>
        <position position="120"/>
    </location>
    <ligand>
        <name>[4Fe-4S] cluster</name>
        <dbReference type="ChEBI" id="CHEBI:49883"/>
        <note>4Fe-4S-S-AdoMet</note>
    </ligand>
</feature>
<feature type="binding site" evidence="1">
    <location>
        <begin position="167"/>
        <end position="168"/>
    </location>
    <ligand>
        <name>S-adenosyl-L-methionine</name>
        <dbReference type="ChEBI" id="CHEBI:59789"/>
    </ligand>
</feature>
<feature type="binding site" evidence="1">
    <location>
        <position position="199"/>
    </location>
    <ligand>
        <name>S-adenosyl-L-methionine</name>
        <dbReference type="ChEBI" id="CHEBI:59789"/>
    </ligand>
</feature>
<feature type="binding site" evidence="1">
    <location>
        <begin position="221"/>
        <end position="223"/>
    </location>
    <ligand>
        <name>S-adenosyl-L-methionine</name>
        <dbReference type="ChEBI" id="CHEBI:59789"/>
    </ligand>
</feature>
<feature type="binding site" evidence="1">
    <location>
        <position position="300"/>
    </location>
    <ligand>
        <name>S-adenosyl-L-methionine</name>
        <dbReference type="ChEBI" id="CHEBI:59789"/>
    </ligand>
</feature>
<feature type="disulfide bond" description="(transient)" evidence="1">
    <location>
        <begin position="106"/>
        <end position="343"/>
    </location>
</feature>
<keyword id="KW-0004">4Fe-4S</keyword>
<keyword id="KW-0963">Cytoplasm</keyword>
<keyword id="KW-1015">Disulfide bond</keyword>
<keyword id="KW-0408">Iron</keyword>
<keyword id="KW-0411">Iron-sulfur</keyword>
<keyword id="KW-0479">Metal-binding</keyword>
<keyword id="KW-0489">Methyltransferase</keyword>
<keyword id="KW-0698">rRNA processing</keyword>
<keyword id="KW-0949">S-adenosyl-L-methionine</keyword>
<keyword id="KW-0808">Transferase</keyword>
<keyword id="KW-0819">tRNA processing</keyword>